<dbReference type="EC" id="6.3.1.13" evidence="1"/>
<dbReference type="EMBL" id="CP001618">
    <property type="protein sequence ID" value="ACQ80498.1"/>
    <property type="molecule type" value="Genomic_DNA"/>
</dbReference>
<dbReference type="RefSeq" id="WP_015882738.1">
    <property type="nucleotide sequence ID" value="NC_012669.1"/>
</dbReference>
<dbReference type="SMR" id="C5BVB1"/>
<dbReference type="STRING" id="471853.Bcav_2247"/>
<dbReference type="KEGG" id="bcv:Bcav_2247"/>
<dbReference type="eggNOG" id="COG0215">
    <property type="taxonomic scope" value="Bacteria"/>
</dbReference>
<dbReference type="HOGENOM" id="CLU_013528_0_0_11"/>
<dbReference type="OrthoDB" id="9815130at2"/>
<dbReference type="Proteomes" id="UP000007962">
    <property type="component" value="Chromosome"/>
</dbReference>
<dbReference type="GO" id="GO:0005829">
    <property type="term" value="C:cytosol"/>
    <property type="evidence" value="ECO:0007669"/>
    <property type="project" value="TreeGrafter"/>
</dbReference>
<dbReference type="GO" id="GO:0005524">
    <property type="term" value="F:ATP binding"/>
    <property type="evidence" value="ECO:0007669"/>
    <property type="project" value="UniProtKB-KW"/>
</dbReference>
<dbReference type="GO" id="GO:0035446">
    <property type="term" value="F:cysteine-glucosaminylinositol ligase activity"/>
    <property type="evidence" value="ECO:0007669"/>
    <property type="project" value="UniProtKB-UniRule"/>
</dbReference>
<dbReference type="GO" id="GO:0004817">
    <property type="term" value="F:cysteine-tRNA ligase activity"/>
    <property type="evidence" value="ECO:0007669"/>
    <property type="project" value="TreeGrafter"/>
</dbReference>
<dbReference type="GO" id="GO:0008270">
    <property type="term" value="F:zinc ion binding"/>
    <property type="evidence" value="ECO:0007669"/>
    <property type="project" value="UniProtKB-UniRule"/>
</dbReference>
<dbReference type="GO" id="GO:0006423">
    <property type="term" value="P:cysteinyl-tRNA aminoacylation"/>
    <property type="evidence" value="ECO:0007669"/>
    <property type="project" value="TreeGrafter"/>
</dbReference>
<dbReference type="GO" id="GO:0010125">
    <property type="term" value="P:mycothiol biosynthetic process"/>
    <property type="evidence" value="ECO:0007669"/>
    <property type="project" value="UniProtKB-UniRule"/>
</dbReference>
<dbReference type="Gene3D" id="1.20.120.640">
    <property type="entry name" value="Anticodon-binding domain of a subclass of class I aminoacyl-tRNA synthetases"/>
    <property type="match status" value="1"/>
</dbReference>
<dbReference type="Gene3D" id="3.40.50.620">
    <property type="entry name" value="HUPs"/>
    <property type="match status" value="1"/>
</dbReference>
<dbReference type="HAMAP" id="MF_01697">
    <property type="entry name" value="MshC"/>
    <property type="match status" value="1"/>
</dbReference>
<dbReference type="InterPro" id="IPR024909">
    <property type="entry name" value="Cys-tRNA/MSH_ligase"/>
</dbReference>
<dbReference type="InterPro" id="IPR017812">
    <property type="entry name" value="Mycothiol_ligase_MshC"/>
</dbReference>
<dbReference type="InterPro" id="IPR014729">
    <property type="entry name" value="Rossmann-like_a/b/a_fold"/>
</dbReference>
<dbReference type="InterPro" id="IPR032678">
    <property type="entry name" value="tRNA-synt_1_cat_dom"/>
</dbReference>
<dbReference type="NCBIfam" id="TIGR03447">
    <property type="entry name" value="mycothiol_MshC"/>
    <property type="match status" value="1"/>
</dbReference>
<dbReference type="PANTHER" id="PTHR10890:SF3">
    <property type="entry name" value="CYSTEINE--TRNA LIGASE, CYTOPLASMIC"/>
    <property type="match status" value="1"/>
</dbReference>
<dbReference type="PANTHER" id="PTHR10890">
    <property type="entry name" value="CYSTEINYL-TRNA SYNTHETASE"/>
    <property type="match status" value="1"/>
</dbReference>
<dbReference type="Pfam" id="PF01406">
    <property type="entry name" value="tRNA-synt_1e"/>
    <property type="match status" value="1"/>
</dbReference>
<dbReference type="PRINTS" id="PR00983">
    <property type="entry name" value="TRNASYNTHCYS"/>
</dbReference>
<dbReference type="SUPFAM" id="SSF52374">
    <property type="entry name" value="Nucleotidylyl transferase"/>
    <property type="match status" value="1"/>
</dbReference>
<feature type="chain" id="PRO_0000400431" description="L-cysteine:1D-myo-inositol 2-amino-2-deoxy-alpha-D-glucopyranoside ligase">
    <location>
        <begin position="1"/>
        <end position="420"/>
    </location>
</feature>
<feature type="short sequence motif" description="'HIGH' region" evidence="1">
    <location>
        <begin position="48"/>
        <end position="58"/>
    </location>
</feature>
<feature type="short sequence motif" description="'ERGGDP' region" evidence="1">
    <location>
        <begin position="194"/>
        <end position="199"/>
    </location>
</feature>
<feature type="short sequence motif" description="'KMSKS' region" evidence="1">
    <location>
        <begin position="297"/>
        <end position="301"/>
    </location>
</feature>
<feature type="binding site" evidence="1">
    <location>
        <begin position="46"/>
        <end position="49"/>
    </location>
    <ligand>
        <name>L-cysteinyl-5'-AMP</name>
        <dbReference type="ChEBI" id="CHEBI:144924"/>
    </ligand>
</feature>
<feature type="binding site" evidence="1">
    <location>
        <position position="46"/>
    </location>
    <ligand>
        <name>Zn(2+)</name>
        <dbReference type="ChEBI" id="CHEBI:29105"/>
    </ligand>
</feature>
<feature type="binding site" evidence="1">
    <location>
        <position position="61"/>
    </location>
    <ligand>
        <name>L-cysteinyl-5'-AMP</name>
        <dbReference type="ChEBI" id="CHEBI:144924"/>
    </ligand>
</feature>
<feature type="binding site" evidence="1">
    <location>
        <begin position="84"/>
        <end position="86"/>
    </location>
    <ligand>
        <name>L-cysteinyl-5'-AMP</name>
        <dbReference type="ChEBI" id="CHEBI:144924"/>
    </ligand>
</feature>
<feature type="binding site" evidence="1">
    <location>
        <position position="235"/>
    </location>
    <ligand>
        <name>L-cysteinyl-5'-AMP</name>
        <dbReference type="ChEBI" id="CHEBI:144924"/>
    </ligand>
</feature>
<feature type="binding site" evidence="1">
    <location>
        <position position="239"/>
    </location>
    <ligand>
        <name>Zn(2+)</name>
        <dbReference type="ChEBI" id="CHEBI:29105"/>
    </ligand>
</feature>
<feature type="binding site" evidence="1">
    <location>
        <begin position="257"/>
        <end position="259"/>
    </location>
    <ligand>
        <name>L-cysteinyl-5'-AMP</name>
        <dbReference type="ChEBI" id="CHEBI:144924"/>
    </ligand>
</feature>
<feature type="binding site" evidence="1">
    <location>
        <position position="264"/>
    </location>
    <ligand>
        <name>Zn(2+)</name>
        <dbReference type="ChEBI" id="CHEBI:29105"/>
    </ligand>
</feature>
<feature type="binding site" evidence="1">
    <location>
        <position position="291"/>
    </location>
    <ligand>
        <name>L-cysteinyl-5'-AMP</name>
        <dbReference type="ChEBI" id="CHEBI:144924"/>
    </ligand>
</feature>
<comment type="function">
    <text evidence="1">Catalyzes the ATP-dependent condensation of GlcN-Ins and L-cysteine to form L-Cys-GlcN-Ins.</text>
</comment>
<comment type="catalytic activity">
    <reaction evidence="1">
        <text>1D-myo-inositol 2-amino-2-deoxy-alpha-D-glucopyranoside + L-cysteine + ATP = 1D-myo-inositol 2-(L-cysteinylamino)-2-deoxy-alpha-D-glucopyranoside + AMP + diphosphate + H(+)</text>
        <dbReference type="Rhea" id="RHEA:26176"/>
        <dbReference type="ChEBI" id="CHEBI:15378"/>
        <dbReference type="ChEBI" id="CHEBI:30616"/>
        <dbReference type="ChEBI" id="CHEBI:33019"/>
        <dbReference type="ChEBI" id="CHEBI:35235"/>
        <dbReference type="ChEBI" id="CHEBI:58886"/>
        <dbReference type="ChEBI" id="CHEBI:58887"/>
        <dbReference type="ChEBI" id="CHEBI:456215"/>
        <dbReference type="EC" id="6.3.1.13"/>
    </reaction>
</comment>
<comment type="cofactor">
    <cofactor evidence="1">
        <name>Zn(2+)</name>
        <dbReference type="ChEBI" id="CHEBI:29105"/>
    </cofactor>
    <text evidence="1">Binds 1 zinc ion per subunit.</text>
</comment>
<comment type="subunit">
    <text evidence="1">Monomer.</text>
</comment>
<comment type="similarity">
    <text evidence="1">Belongs to the class-I aminoacyl-tRNA synthetase family. MshC subfamily.</text>
</comment>
<keyword id="KW-0067">ATP-binding</keyword>
<keyword id="KW-0436">Ligase</keyword>
<keyword id="KW-0479">Metal-binding</keyword>
<keyword id="KW-0547">Nucleotide-binding</keyword>
<keyword id="KW-1185">Reference proteome</keyword>
<keyword id="KW-0862">Zinc</keyword>
<sequence length="420" mass="44406">MLAWSSPDVPSLDDPGECPREVRVRDTATGELTPAGHDGRASMYVCGITPYDSTHLGHANTYVSFDLLVRAWRDAGLAVTYVQNVTDVDDPLLERAAATGVDWRQLAADQIELFHHDMVALRVVAPEHYIGAVESVPDVVRAVERMLADRAAYRVGAAADGAGDGDVYAALSADPRFGSLGSLDEAEMLELFGERGGDPDRLGKQAPLDPLLWRVEREEEPSWPGESLGRGRPGWHIECATIAARFLGVPFDVQGGGTDLEFPHHEMSESHLRVLTATAHPARAHVHGGMVAYQGHKMSKSRGNLVFVSELVASGVDPMAVRLVILAHHYAEDWEYEAGALGLAEERLATWRAALAQGSGPSGADVVAGVRAALANDLDAPGAVAVVDDWAAAAIAGSGDDAAAGATVARAVDALLGVAL</sequence>
<accession>C5BVB1</accession>
<evidence type="ECO:0000255" key="1">
    <source>
        <dbReference type="HAMAP-Rule" id="MF_01697"/>
    </source>
</evidence>
<reference key="1">
    <citation type="journal article" date="2009" name="Stand. Genomic Sci.">
        <title>Complete genome sequence of Beutenbergia cavernae type strain (HKI 0122).</title>
        <authorList>
            <person name="Land M."/>
            <person name="Pukall R."/>
            <person name="Abt B."/>
            <person name="Goker M."/>
            <person name="Rohde M."/>
            <person name="Glavina Del Rio T."/>
            <person name="Tice H."/>
            <person name="Copeland A."/>
            <person name="Cheng J.F."/>
            <person name="Lucas S."/>
            <person name="Chen F."/>
            <person name="Nolan M."/>
            <person name="Bruce D."/>
            <person name="Goodwin L."/>
            <person name="Pitluck S."/>
            <person name="Ivanova N."/>
            <person name="Mavromatis K."/>
            <person name="Ovchinnikova G."/>
            <person name="Pati A."/>
            <person name="Chen A."/>
            <person name="Palaniappan K."/>
            <person name="Hauser L."/>
            <person name="Chang Y.J."/>
            <person name="Jefferies C.C."/>
            <person name="Saunders E."/>
            <person name="Brettin T."/>
            <person name="Detter J.C."/>
            <person name="Han C."/>
            <person name="Chain P."/>
            <person name="Bristow J."/>
            <person name="Eisen J.A."/>
            <person name="Markowitz V."/>
            <person name="Hugenholtz P."/>
            <person name="Kyrpides N.C."/>
            <person name="Klenk H.P."/>
            <person name="Lapidus A."/>
        </authorList>
    </citation>
    <scope>NUCLEOTIDE SEQUENCE [LARGE SCALE GENOMIC DNA]</scope>
    <source>
        <strain>ATCC BAA-8 / DSM 12333 / CCUG 43141 / JCM 11478 / NBRC 16432 / NCIMB 13614 / HKI 0122</strain>
    </source>
</reference>
<name>MSHC_BEUC1</name>
<proteinExistence type="inferred from homology"/>
<organism>
    <name type="scientific">Beutenbergia cavernae (strain ATCC BAA-8 / DSM 12333 / CCUG 43141 / JCM 11478 / NBRC 16432 / NCIMB 13614 / HKI 0122)</name>
    <dbReference type="NCBI Taxonomy" id="471853"/>
    <lineage>
        <taxon>Bacteria</taxon>
        <taxon>Bacillati</taxon>
        <taxon>Actinomycetota</taxon>
        <taxon>Actinomycetes</taxon>
        <taxon>Micrococcales</taxon>
        <taxon>Beutenbergiaceae</taxon>
        <taxon>Beutenbergia</taxon>
    </lineage>
</organism>
<protein>
    <recommendedName>
        <fullName evidence="1">L-cysteine:1D-myo-inositol 2-amino-2-deoxy-alpha-D-glucopyranoside ligase</fullName>
        <shortName evidence="1">L-Cys:GlcN-Ins ligase</shortName>
        <ecNumber evidence="1">6.3.1.13</ecNumber>
    </recommendedName>
    <alternativeName>
        <fullName evidence="1">Mycothiol ligase</fullName>
        <shortName evidence="1">MSH ligase</shortName>
    </alternativeName>
</protein>
<gene>
    <name evidence="1" type="primary">mshC</name>
    <name type="ordered locus">Bcav_2247</name>
</gene>